<proteinExistence type="inferred from homology"/>
<comment type="function">
    <text evidence="1">Specifically methylates the uridine in position 2552 of 23S rRNA at the 2'-O position of the ribose in the fully assembled 50S ribosomal subunit.</text>
</comment>
<comment type="catalytic activity">
    <reaction evidence="1">
        <text>uridine(2552) in 23S rRNA + S-adenosyl-L-methionine = 2'-O-methyluridine(2552) in 23S rRNA + S-adenosyl-L-homocysteine + H(+)</text>
        <dbReference type="Rhea" id="RHEA:42720"/>
        <dbReference type="Rhea" id="RHEA-COMP:10202"/>
        <dbReference type="Rhea" id="RHEA-COMP:10203"/>
        <dbReference type="ChEBI" id="CHEBI:15378"/>
        <dbReference type="ChEBI" id="CHEBI:57856"/>
        <dbReference type="ChEBI" id="CHEBI:59789"/>
        <dbReference type="ChEBI" id="CHEBI:65315"/>
        <dbReference type="ChEBI" id="CHEBI:74478"/>
        <dbReference type="EC" id="2.1.1.166"/>
    </reaction>
</comment>
<comment type="subcellular location">
    <subcellularLocation>
        <location evidence="1">Cytoplasm</location>
    </subcellularLocation>
</comment>
<comment type="similarity">
    <text evidence="1">Belongs to the class I-like SAM-binding methyltransferase superfamily. RNA methyltransferase RlmE family.</text>
</comment>
<sequence length="216" mass="24744">MLAIKTRVKTAKGRKLSSTRWLHRHLNDQYVQKTNKDSYRSRSAYKLIEIDNKFKLLQAGQKIVDLGASPGGWSQVASQKGVKVVAIDIKPVNTISGVKYIQYDINELETLRERFKDQKFDVILSDMAPESCGLKSLDHIRIMLLCEAALNFAKHFLNYGGKFVVKIFQGESDKDFYNELKKMFKIVKYFKPKSSRSESTEMYLVGLGFISNSFPI</sequence>
<gene>
    <name evidence="1" type="primary">rlmE</name>
    <name evidence="1" type="synonym">ftsJ</name>
    <name evidence="1" type="synonym">rrmJ</name>
    <name type="ordered locus">Wbm0577</name>
</gene>
<organism>
    <name type="scientific">Wolbachia sp. subsp. Brugia malayi (strain TRS)</name>
    <dbReference type="NCBI Taxonomy" id="292805"/>
    <lineage>
        <taxon>Bacteria</taxon>
        <taxon>Pseudomonadati</taxon>
        <taxon>Pseudomonadota</taxon>
        <taxon>Alphaproteobacteria</taxon>
        <taxon>Rickettsiales</taxon>
        <taxon>Anaplasmataceae</taxon>
        <taxon>Wolbachieae</taxon>
        <taxon>Wolbachia</taxon>
    </lineage>
</organism>
<feature type="chain" id="PRO_0000155553" description="Ribosomal RNA large subunit methyltransferase E">
    <location>
        <begin position="1"/>
        <end position="216"/>
    </location>
</feature>
<feature type="active site" description="Proton acceptor" evidence="1">
    <location>
        <position position="166"/>
    </location>
</feature>
<feature type="binding site" evidence="1">
    <location>
        <position position="71"/>
    </location>
    <ligand>
        <name>S-adenosyl-L-methionine</name>
        <dbReference type="ChEBI" id="CHEBI:59789"/>
    </ligand>
</feature>
<feature type="binding site" evidence="1">
    <location>
        <position position="73"/>
    </location>
    <ligand>
        <name>S-adenosyl-L-methionine</name>
        <dbReference type="ChEBI" id="CHEBI:59789"/>
    </ligand>
</feature>
<feature type="binding site" evidence="1">
    <location>
        <position position="88"/>
    </location>
    <ligand>
        <name>S-adenosyl-L-methionine</name>
        <dbReference type="ChEBI" id="CHEBI:59789"/>
    </ligand>
</feature>
<feature type="binding site" evidence="1">
    <location>
        <position position="104"/>
    </location>
    <ligand>
        <name>S-adenosyl-L-methionine</name>
        <dbReference type="ChEBI" id="CHEBI:59789"/>
    </ligand>
</feature>
<feature type="binding site" evidence="1">
    <location>
        <position position="126"/>
    </location>
    <ligand>
        <name>S-adenosyl-L-methionine</name>
        <dbReference type="ChEBI" id="CHEBI:59789"/>
    </ligand>
</feature>
<accession>Q5GS59</accession>
<reference key="1">
    <citation type="journal article" date="2005" name="PLoS Biol.">
        <title>The Wolbachia genome of Brugia malayi: endosymbiont evolution within a human pathogenic nematode.</title>
        <authorList>
            <person name="Foster J."/>
            <person name="Ganatra M."/>
            <person name="Kamal I."/>
            <person name="Ware J."/>
            <person name="Makarova K."/>
            <person name="Ivanova N."/>
            <person name="Bhattacharyya A."/>
            <person name="Kapatral V."/>
            <person name="Kumar S."/>
            <person name="Posfai J."/>
            <person name="Vincze T."/>
            <person name="Ingram J."/>
            <person name="Moran L."/>
            <person name="Lapidus A."/>
            <person name="Omelchenko M."/>
            <person name="Kyrpides N."/>
            <person name="Ghedin E."/>
            <person name="Wang S."/>
            <person name="Goltsman E."/>
            <person name="Joukov V."/>
            <person name="Ostrovskaya O."/>
            <person name="Tsukerman K."/>
            <person name="Mazur M."/>
            <person name="Comb D."/>
            <person name="Koonin E."/>
            <person name="Slatko B."/>
        </authorList>
    </citation>
    <scope>NUCLEOTIDE SEQUENCE [LARGE SCALE GENOMIC DNA]</scope>
    <source>
        <strain>TRS</strain>
    </source>
</reference>
<dbReference type="EC" id="2.1.1.166" evidence="1"/>
<dbReference type="EMBL" id="AE017321">
    <property type="protein sequence ID" value="AAW71165.1"/>
    <property type="molecule type" value="Genomic_DNA"/>
</dbReference>
<dbReference type="SMR" id="Q5GS59"/>
<dbReference type="STRING" id="292805.Wbm0577"/>
<dbReference type="KEGG" id="wbm:Wbm0577"/>
<dbReference type="eggNOG" id="COG0293">
    <property type="taxonomic scope" value="Bacteria"/>
</dbReference>
<dbReference type="HOGENOM" id="CLU_009422_4_0_5"/>
<dbReference type="Proteomes" id="UP000000534">
    <property type="component" value="Chromosome"/>
</dbReference>
<dbReference type="GO" id="GO:0005737">
    <property type="term" value="C:cytoplasm"/>
    <property type="evidence" value="ECO:0007669"/>
    <property type="project" value="UniProtKB-SubCell"/>
</dbReference>
<dbReference type="GO" id="GO:0008650">
    <property type="term" value="F:rRNA (uridine-2'-O-)-methyltransferase activity"/>
    <property type="evidence" value="ECO:0007669"/>
    <property type="project" value="UniProtKB-UniRule"/>
</dbReference>
<dbReference type="Gene3D" id="3.40.50.150">
    <property type="entry name" value="Vaccinia Virus protein VP39"/>
    <property type="match status" value="1"/>
</dbReference>
<dbReference type="HAMAP" id="MF_01547">
    <property type="entry name" value="RNA_methyltr_E"/>
    <property type="match status" value="1"/>
</dbReference>
<dbReference type="InterPro" id="IPR050082">
    <property type="entry name" value="RNA_methyltr_RlmE"/>
</dbReference>
<dbReference type="InterPro" id="IPR002877">
    <property type="entry name" value="RNA_MeTrfase_FtsJ_dom"/>
</dbReference>
<dbReference type="InterPro" id="IPR015507">
    <property type="entry name" value="rRNA-MeTfrase_E"/>
</dbReference>
<dbReference type="InterPro" id="IPR029063">
    <property type="entry name" value="SAM-dependent_MTases_sf"/>
</dbReference>
<dbReference type="PANTHER" id="PTHR10920">
    <property type="entry name" value="RIBOSOMAL RNA METHYLTRANSFERASE"/>
    <property type="match status" value="1"/>
</dbReference>
<dbReference type="PANTHER" id="PTHR10920:SF18">
    <property type="entry name" value="RRNA METHYLTRANSFERASE 2, MITOCHONDRIAL"/>
    <property type="match status" value="1"/>
</dbReference>
<dbReference type="Pfam" id="PF01728">
    <property type="entry name" value="FtsJ"/>
    <property type="match status" value="1"/>
</dbReference>
<dbReference type="PIRSF" id="PIRSF005461">
    <property type="entry name" value="23S_rRNA_mtase"/>
    <property type="match status" value="1"/>
</dbReference>
<dbReference type="SUPFAM" id="SSF53335">
    <property type="entry name" value="S-adenosyl-L-methionine-dependent methyltransferases"/>
    <property type="match status" value="1"/>
</dbReference>
<evidence type="ECO:0000255" key="1">
    <source>
        <dbReference type="HAMAP-Rule" id="MF_01547"/>
    </source>
</evidence>
<protein>
    <recommendedName>
        <fullName evidence="1">Ribosomal RNA large subunit methyltransferase E</fullName>
        <ecNumber evidence="1">2.1.1.166</ecNumber>
    </recommendedName>
    <alternativeName>
        <fullName evidence="1">23S rRNA Um2552 methyltransferase</fullName>
    </alternativeName>
    <alternativeName>
        <fullName evidence="1">rRNA (uridine-2'-O-)-methyltransferase</fullName>
    </alternativeName>
</protein>
<keyword id="KW-0963">Cytoplasm</keyword>
<keyword id="KW-0489">Methyltransferase</keyword>
<keyword id="KW-1185">Reference proteome</keyword>
<keyword id="KW-0698">rRNA processing</keyword>
<keyword id="KW-0949">S-adenosyl-L-methionine</keyword>
<keyword id="KW-0808">Transferase</keyword>
<name>RLME_WOLTR</name>